<proteinExistence type="evidence at protein level"/>
<reference key="1">
    <citation type="journal article" date="2009" name="PLoS Biol.">
        <title>Lineage-specific biology revealed by a finished genome assembly of the mouse.</title>
        <authorList>
            <person name="Church D.M."/>
            <person name="Goodstadt L."/>
            <person name="Hillier L.W."/>
            <person name="Zody M.C."/>
            <person name="Goldstein S."/>
            <person name="She X."/>
            <person name="Bult C.J."/>
            <person name="Agarwala R."/>
            <person name="Cherry J.L."/>
            <person name="DiCuccio M."/>
            <person name="Hlavina W."/>
            <person name="Kapustin Y."/>
            <person name="Meric P."/>
            <person name="Maglott D."/>
            <person name="Birtle Z."/>
            <person name="Marques A.C."/>
            <person name="Graves T."/>
            <person name="Zhou S."/>
            <person name="Teague B."/>
            <person name="Potamousis K."/>
            <person name="Churas C."/>
            <person name="Place M."/>
            <person name="Herschleb J."/>
            <person name="Runnheim R."/>
            <person name="Forrest D."/>
            <person name="Amos-Landgraf J."/>
            <person name="Schwartz D.C."/>
            <person name="Cheng Z."/>
            <person name="Lindblad-Toh K."/>
            <person name="Eichler E.E."/>
            <person name="Ponting C.P."/>
        </authorList>
    </citation>
    <scope>NUCLEOTIDE SEQUENCE [LARGE SCALE GENOMIC DNA]</scope>
    <source>
        <strain>C57BL/6J</strain>
    </source>
</reference>
<reference key="2">
    <citation type="journal article" date="2004" name="Genome Res.">
        <title>The status, quality, and expansion of the NIH full-length cDNA project: the Mammalian Gene Collection (MGC).</title>
        <authorList>
            <consortium name="The MGC Project Team"/>
        </authorList>
    </citation>
    <scope>NUCLEOTIDE SEQUENCE [LARGE SCALE MRNA]</scope>
    <source>
        <strain>C57BL/6J</strain>
        <strain>FVB/N</strain>
        <tissue>Eye</tissue>
        <tissue>Mammary tumor</tissue>
    </source>
</reference>
<reference key="3">
    <citation type="journal article" date="2005" name="Science">
        <title>The transcriptional landscape of the mammalian genome.</title>
        <authorList>
            <person name="Carninci P."/>
            <person name="Kasukawa T."/>
            <person name="Katayama S."/>
            <person name="Gough J."/>
            <person name="Frith M.C."/>
            <person name="Maeda N."/>
            <person name="Oyama R."/>
            <person name="Ravasi T."/>
            <person name="Lenhard B."/>
            <person name="Wells C."/>
            <person name="Kodzius R."/>
            <person name="Shimokawa K."/>
            <person name="Bajic V.B."/>
            <person name="Brenner S.E."/>
            <person name="Batalov S."/>
            <person name="Forrest A.R."/>
            <person name="Zavolan M."/>
            <person name="Davis M.J."/>
            <person name="Wilming L.G."/>
            <person name="Aidinis V."/>
            <person name="Allen J.E."/>
            <person name="Ambesi-Impiombato A."/>
            <person name="Apweiler R."/>
            <person name="Aturaliya R.N."/>
            <person name="Bailey T.L."/>
            <person name="Bansal M."/>
            <person name="Baxter L."/>
            <person name="Beisel K.W."/>
            <person name="Bersano T."/>
            <person name="Bono H."/>
            <person name="Chalk A.M."/>
            <person name="Chiu K.P."/>
            <person name="Choudhary V."/>
            <person name="Christoffels A."/>
            <person name="Clutterbuck D.R."/>
            <person name="Crowe M.L."/>
            <person name="Dalla E."/>
            <person name="Dalrymple B.P."/>
            <person name="de Bono B."/>
            <person name="Della Gatta G."/>
            <person name="di Bernardo D."/>
            <person name="Down T."/>
            <person name="Engstrom P."/>
            <person name="Fagiolini M."/>
            <person name="Faulkner G."/>
            <person name="Fletcher C.F."/>
            <person name="Fukushima T."/>
            <person name="Furuno M."/>
            <person name="Futaki S."/>
            <person name="Gariboldi M."/>
            <person name="Georgii-Hemming P."/>
            <person name="Gingeras T.R."/>
            <person name="Gojobori T."/>
            <person name="Green R.E."/>
            <person name="Gustincich S."/>
            <person name="Harbers M."/>
            <person name="Hayashi Y."/>
            <person name="Hensch T.K."/>
            <person name="Hirokawa N."/>
            <person name="Hill D."/>
            <person name="Huminiecki L."/>
            <person name="Iacono M."/>
            <person name="Ikeo K."/>
            <person name="Iwama A."/>
            <person name="Ishikawa T."/>
            <person name="Jakt M."/>
            <person name="Kanapin A."/>
            <person name="Katoh M."/>
            <person name="Kawasawa Y."/>
            <person name="Kelso J."/>
            <person name="Kitamura H."/>
            <person name="Kitano H."/>
            <person name="Kollias G."/>
            <person name="Krishnan S.P."/>
            <person name="Kruger A."/>
            <person name="Kummerfeld S.K."/>
            <person name="Kurochkin I.V."/>
            <person name="Lareau L.F."/>
            <person name="Lazarevic D."/>
            <person name="Lipovich L."/>
            <person name="Liu J."/>
            <person name="Liuni S."/>
            <person name="McWilliam S."/>
            <person name="Madan Babu M."/>
            <person name="Madera M."/>
            <person name="Marchionni L."/>
            <person name="Matsuda H."/>
            <person name="Matsuzawa S."/>
            <person name="Miki H."/>
            <person name="Mignone F."/>
            <person name="Miyake S."/>
            <person name="Morris K."/>
            <person name="Mottagui-Tabar S."/>
            <person name="Mulder N."/>
            <person name="Nakano N."/>
            <person name="Nakauchi H."/>
            <person name="Ng P."/>
            <person name="Nilsson R."/>
            <person name="Nishiguchi S."/>
            <person name="Nishikawa S."/>
            <person name="Nori F."/>
            <person name="Ohara O."/>
            <person name="Okazaki Y."/>
            <person name="Orlando V."/>
            <person name="Pang K.C."/>
            <person name="Pavan W.J."/>
            <person name="Pavesi G."/>
            <person name="Pesole G."/>
            <person name="Petrovsky N."/>
            <person name="Piazza S."/>
            <person name="Reed J."/>
            <person name="Reid J.F."/>
            <person name="Ring B.Z."/>
            <person name="Ringwald M."/>
            <person name="Rost B."/>
            <person name="Ruan Y."/>
            <person name="Salzberg S.L."/>
            <person name="Sandelin A."/>
            <person name="Schneider C."/>
            <person name="Schoenbach C."/>
            <person name="Sekiguchi K."/>
            <person name="Semple C.A."/>
            <person name="Seno S."/>
            <person name="Sessa L."/>
            <person name="Sheng Y."/>
            <person name="Shibata Y."/>
            <person name="Shimada H."/>
            <person name="Shimada K."/>
            <person name="Silva D."/>
            <person name="Sinclair B."/>
            <person name="Sperling S."/>
            <person name="Stupka E."/>
            <person name="Sugiura K."/>
            <person name="Sultana R."/>
            <person name="Takenaka Y."/>
            <person name="Taki K."/>
            <person name="Tammoja K."/>
            <person name="Tan S.L."/>
            <person name="Tang S."/>
            <person name="Taylor M.S."/>
            <person name="Tegner J."/>
            <person name="Teichmann S.A."/>
            <person name="Ueda H.R."/>
            <person name="van Nimwegen E."/>
            <person name="Verardo R."/>
            <person name="Wei C.L."/>
            <person name="Yagi K."/>
            <person name="Yamanishi H."/>
            <person name="Zabarovsky E."/>
            <person name="Zhu S."/>
            <person name="Zimmer A."/>
            <person name="Hide W."/>
            <person name="Bult C."/>
            <person name="Grimmond S.M."/>
            <person name="Teasdale R.D."/>
            <person name="Liu E.T."/>
            <person name="Brusic V."/>
            <person name="Quackenbush J."/>
            <person name="Wahlestedt C."/>
            <person name="Mattick J.S."/>
            <person name="Hume D.A."/>
            <person name="Kai C."/>
            <person name="Sasaki D."/>
            <person name="Tomaru Y."/>
            <person name="Fukuda S."/>
            <person name="Kanamori-Katayama M."/>
            <person name="Suzuki M."/>
            <person name="Aoki J."/>
            <person name="Arakawa T."/>
            <person name="Iida J."/>
            <person name="Imamura K."/>
            <person name="Itoh M."/>
            <person name="Kato T."/>
            <person name="Kawaji H."/>
            <person name="Kawagashira N."/>
            <person name="Kawashima T."/>
            <person name="Kojima M."/>
            <person name="Kondo S."/>
            <person name="Konno H."/>
            <person name="Nakano K."/>
            <person name="Ninomiya N."/>
            <person name="Nishio T."/>
            <person name="Okada M."/>
            <person name="Plessy C."/>
            <person name="Shibata K."/>
            <person name="Shiraki T."/>
            <person name="Suzuki S."/>
            <person name="Tagami M."/>
            <person name="Waki K."/>
            <person name="Watahiki A."/>
            <person name="Okamura-Oho Y."/>
            <person name="Suzuki H."/>
            <person name="Kawai J."/>
            <person name="Hayashizaki Y."/>
        </authorList>
    </citation>
    <scope>NUCLEOTIDE SEQUENCE [LARGE SCALE MRNA] OF 1-962</scope>
    <source>
        <strain>C57BL/6J</strain>
        <tissue>Pancreas</tissue>
    </source>
</reference>
<reference key="4">
    <citation type="submission" date="1990-07" db="EMBL/GenBank/DDBJ databases">
        <title>M.musculus mRNA for glutamyl-tRNA synthetase.</title>
        <authorList>
            <person name="Knippers R."/>
        </authorList>
    </citation>
    <scope>NUCLEOTIDE SEQUENCE [MRNA] OF 406-1512</scope>
</reference>
<reference key="5">
    <citation type="journal article" date="2002" name="Proc. Natl. Acad. Sci. U.S.A.">
        <title>p38 is essential for the assembly and stability of macromolecular tRNA synthetase complex: implications for its physiological significance.</title>
        <authorList>
            <person name="Kim J.Y."/>
            <person name="Kang Y.-S."/>
            <person name="Lee J.-W."/>
            <person name="Kim H.J."/>
            <person name="Ahn Y.H."/>
            <person name="Park H."/>
            <person name="Ko Y.-G."/>
            <person name="Kim S."/>
        </authorList>
    </citation>
    <scope>SUBUNIT</scope>
</reference>
<reference key="6">
    <citation type="journal article" date="2005" name="Nat. Biotechnol.">
        <title>Immunoaffinity profiling of tyrosine phosphorylation in cancer cells.</title>
        <authorList>
            <person name="Rush J."/>
            <person name="Moritz A."/>
            <person name="Lee K.A."/>
            <person name="Guo A."/>
            <person name="Goss V.L."/>
            <person name="Spek E.J."/>
            <person name="Zhang H."/>
            <person name="Zha X.-M."/>
            <person name="Polakiewicz R.D."/>
            <person name="Comb M.J."/>
        </authorList>
    </citation>
    <scope>IDENTIFICATION BY MASS SPECTROMETRY [LARGE SCALE ANALYSIS]</scope>
</reference>
<reference key="7">
    <citation type="journal article" date="2010" name="Cell">
        <title>A tissue-specific atlas of mouse protein phosphorylation and expression.</title>
        <authorList>
            <person name="Huttlin E.L."/>
            <person name="Jedrychowski M.P."/>
            <person name="Elias J.E."/>
            <person name="Goswami T."/>
            <person name="Rad R."/>
            <person name="Beausoleil S.A."/>
            <person name="Villen J."/>
            <person name="Haas W."/>
            <person name="Sowa M.E."/>
            <person name="Gygi S.P."/>
        </authorList>
    </citation>
    <scope>IDENTIFICATION BY MASS SPECTROMETRY [LARGE SCALE ANALYSIS]</scope>
    <source>
        <tissue>Brain</tissue>
        <tissue>Brown adipose tissue</tissue>
        <tissue>Heart</tissue>
        <tissue>Kidney</tissue>
        <tissue>Liver</tissue>
        <tissue>Lung</tissue>
        <tissue>Pancreas</tissue>
        <tissue>Spleen</tissue>
        <tissue>Testis</tissue>
    </source>
</reference>
<reference key="8">
    <citation type="journal article" date="2012" name="Mol. Cell. Biol.">
        <title>Heterotrimeric GAIT complex drives transcript-selective translation inhibition in murine macrophages.</title>
        <authorList>
            <person name="Arif A."/>
            <person name="Chatterjee P."/>
            <person name="Moodt R.A."/>
            <person name="Fox P.L."/>
        </authorList>
    </citation>
    <scope>FUNCTION</scope>
    <scope>PHOSPHORYLATION AT SER-999</scope>
    <scope>SUBUNIT</scope>
    <scope>RECONSTITUTION OF THE GAIT COMPLEX</scope>
    <scope>MUTAGENESIS OF SER-999</scope>
</reference>
<reference key="9">
    <citation type="journal article" date="2013" name="Mol. Cell">
        <title>SIRT5-mediated lysine desuccinylation impacts diverse metabolic pathways.</title>
        <authorList>
            <person name="Park J."/>
            <person name="Chen Y."/>
            <person name="Tishkoff D.X."/>
            <person name="Peng C."/>
            <person name="Tan M."/>
            <person name="Dai L."/>
            <person name="Xie Z."/>
            <person name="Zhang Y."/>
            <person name="Zwaans B.M."/>
            <person name="Skinner M.E."/>
            <person name="Lombard D.B."/>
            <person name="Zhao Y."/>
        </authorList>
    </citation>
    <scope>ACETYLATION [LARGE SCALE ANALYSIS] AT LYS-300; LYS-788 AND LYS-861</scope>
    <scope>IDENTIFICATION BY MASS SPECTROMETRY [LARGE SCALE ANALYSIS]</scope>
    <source>
        <tissue>Embryonic fibroblast</tissue>
    </source>
</reference>
<reference key="10">
    <citation type="journal article" date="2017" name="Nature">
        <title>EPRS is a critical mTORC1-S6K1 effector that influences adiposity in mice.</title>
        <authorList>
            <person name="Arif A."/>
            <person name="Terenzi F."/>
            <person name="Potdar A.A."/>
            <person name="Jia J."/>
            <person name="Sacks J."/>
            <person name="China A."/>
            <person name="Halawani D."/>
            <person name="Vasu K."/>
            <person name="Li X."/>
            <person name="Brown J.M."/>
            <person name="Chen J."/>
            <person name="Kozma S.C."/>
            <person name="Thomas G."/>
            <person name="Fox P.L."/>
        </authorList>
    </citation>
    <scope>FUNCTION</scope>
    <scope>INTERACTION WITH SLC27A1</scope>
    <scope>SUBCELLULAR LOCATION</scope>
    <scope>TOPOLOGY</scope>
    <scope>PHOSPHORYLATION AT SER-999 BY RPS6KB1</scope>
    <scope>MUTAGENESIS OF SER-999</scope>
</reference>
<name>SYEP_MOUSE</name>
<keyword id="KW-0007">Acetylation</keyword>
<keyword id="KW-0030">Aminoacyl-tRNA synthetase</keyword>
<keyword id="KW-0067">ATP-binding</keyword>
<keyword id="KW-0963">Cytoplasm</keyword>
<keyword id="KW-0436">Ligase</keyword>
<keyword id="KW-0460">Magnesium</keyword>
<keyword id="KW-0472">Membrane</keyword>
<keyword id="KW-0479">Metal-binding</keyword>
<keyword id="KW-0488">Methylation</keyword>
<keyword id="KW-0511">Multifunctional enzyme</keyword>
<keyword id="KW-0547">Nucleotide-binding</keyword>
<keyword id="KW-0597">Phosphoprotein</keyword>
<keyword id="KW-0648">Protein biosynthesis</keyword>
<keyword id="KW-1185">Reference proteome</keyword>
<keyword id="KW-0677">Repeat</keyword>
<keyword id="KW-0694">RNA-binding</keyword>
<keyword id="KW-0810">Translation regulation</keyword>
<keyword id="KW-0862">Zinc</keyword>
<gene>
    <name evidence="12" type="primary">Eprs1</name>
    <name evidence="9" type="synonym">Eprs</name>
    <name type="synonym">Qprs</name>
</gene>
<accession>Q8CGC7</accession>
<accession>E9QKC4</accession>
<accession>Q3UFJ2</accession>
<accession>Q4VC16</accession>
<organism>
    <name type="scientific">Mus musculus</name>
    <name type="common">Mouse</name>
    <dbReference type="NCBI Taxonomy" id="10090"/>
    <lineage>
        <taxon>Eukaryota</taxon>
        <taxon>Metazoa</taxon>
        <taxon>Chordata</taxon>
        <taxon>Craniata</taxon>
        <taxon>Vertebrata</taxon>
        <taxon>Euteleostomi</taxon>
        <taxon>Mammalia</taxon>
        <taxon>Eutheria</taxon>
        <taxon>Euarchontoglires</taxon>
        <taxon>Glires</taxon>
        <taxon>Rodentia</taxon>
        <taxon>Myomorpha</taxon>
        <taxon>Muroidea</taxon>
        <taxon>Muridae</taxon>
        <taxon>Murinae</taxon>
        <taxon>Mus</taxon>
        <taxon>Mus</taxon>
    </lineage>
</organism>
<feature type="chain" id="PRO_0000119744" description="Bifunctional glutamate/proline--tRNA ligase">
    <location>
        <begin position="1"/>
        <end position="1512"/>
    </location>
</feature>
<feature type="domain" description="WHEP-TRS 1" evidence="4">
    <location>
        <begin position="749"/>
        <end position="805"/>
    </location>
</feature>
<feature type="domain" description="WHEP-TRS 2" evidence="4">
    <location>
        <begin position="822"/>
        <end position="878"/>
    </location>
</feature>
<feature type="domain" description="WHEP-TRS 3" evidence="4">
    <location>
        <begin position="900"/>
        <end position="956"/>
    </location>
</feature>
<feature type="region of interest" description="Glutamate--tRNA ligase" evidence="2">
    <location>
        <begin position="164"/>
        <end position="759"/>
    </location>
</feature>
<feature type="region of interest" description="Disordered" evidence="5">
    <location>
        <begin position="294"/>
        <end position="315"/>
    </location>
</feature>
<feature type="region of interest" description="Disordered" evidence="5">
    <location>
        <begin position="709"/>
        <end position="742"/>
    </location>
</feature>
<feature type="region of interest" description="3 X 57 AA approximate repeats" evidence="1">
    <location>
        <begin position="760"/>
        <end position="956"/>
    </location>
</feature>
<feature type="region of interest" description="Disordered" evidence="5">
    <location>
        <begin position="795"/>
        <end position="819"/>
    </location>
</feature>
<feature type="region of interest" description="Disordered" evidence="5">
    <location>
        <begin position="869"/>
        <end position="898"/>
    </location>
</feature>
<feature type="region of interest" description="Disordered" evidence="5">
    <location>
        <begin position="956"/>
        <end position="1011"/>
    </location>
</feature>
<feature type="region of interest" description="Proline--tRNA ligase" evidence="2">
    <location>
        <begin position="1007"/>
        <end position="1512"/>
    </location>
</feature>
<feature type="short sequence motif" description="'HIGH' region" evidence="2">
    <location>
        <begin position="204"/>
        <end position="214"/>
    </location>
</feature>
<feature type="short sequence motif" description="'KMSKS' region" evidence="2">
    <location>
        <begin position="432"/>
        <end position="436"/>
    </location>
</feature>
<feature type="compositionally biased region" description="Basic and acidic residues" evidence="5">
    <location>
        <begin position="299"/>
        <end position="308"/>
    </location>
</feature>
<feature type="compositionally biased region" description="Basic and acidic residues" evidence="5">
    <location>
        <begin position="709"/>
        <end position="736"/>
    </location>
</feature>
<feature type="compositionally biased region" description="Polar residues" evidence="5">
    <location>
        <begin position="808"/>
        <end position="819"/>
    </location>
</feature>
<feature type="compositionally biased region" description="Polar residues" evidence="5">
    <location>
        <begin position="878"/>
        <end position="892"/>
    </location>
</feature>
<feature type="compositionally biased region" description="Basic and acidic residues" evidence="5">
    <location>
        <begin position="958"/>
        <end position="976"/>
    </location>
</feature>
<feature type="compositionally biased region" description="Gly residues" evidence="5">
    <location>
        <begin position="997"/>
        <end position="1006"/>
    </location>
</feature>
<feature type="binding site" evidence="1">
    <location>
        <begin position="1121"/>
        <end position="1123"/>
    </location>
    <ligand>
        <name>L-proline</name>
        <dbReference type="ChEBI" id="CHEBI:60039"/>
    </ligand>
</feature>
<feature type="binding site" evidence="1">
    <location>
        <position position="1152"/>
    </location>
    <ligand>
        <name>ATP</name>
        <dbReference type="ChEBI" id="CHEBI:30616"/>
    </ligand>
</feature>
<feature type="binding site" evidence="1">
    <location>
        <position position="1152"/>
    </location>
    <ligand>
        <name>L-proline</name>
        <dbReference type="ChEBI" id="CHEBI:60039"/>
    </ligand>
</feature>
<feature type="binding site" evidence="1">
    <location>
        <position position="1154"/>
    </location>
    <ligand>
        <name>ATP</name>
        <dbReference type="ChEBI" id="CHEBI:30616"/>
    </ligand>
</feature>
<feature type="binding site" evidence="1">
    <location>
        <position position="1163"/>
    </location>
    <ligand>
        <name>ATP</name>
        <dbReference type="ChEBI" id="CHEBI:30616"/>
    </ligand>
</feature>
<feature type="binding site" evidence="1">
    <location>
        <position position="1164"/>
    </location>
    <ligand>
        <name>ATP</name>
        <dbReference type="ChEBI" id="CHEBI:30616"/>
    </ligand>
</feature>
<feature type="binding site" evidence="1">
    <location>
        <position position="1237"/>
    </location>
    <ligand>
        <name>ATP</name>
        <dbReference type="ChEBI" id="CHEBI:30616"/>
    </ligand>
</feature>
<feature type="binding site" evidence="1">
    <location>
        <position position="1237"/>
    </location>
    <ligand>
        <name>Mg(2+)</name>
        <dbReference type="ChEBI" id="CHEBI:18420"/>
    </ligand>
</feature>
<feature type="binding site" evidence="1">
    <location>
        <position position="1240"/>
    </location>
    <ligand>
        <name>ATP</name>
        <dbReference type="ChEBI" id="CHEBI:30616"/>
    </ligand>
</feature>
<feature type="binding site" evidence="1">
    <location>
        <position position="1242"/>
    </location>
    <ligand>
        <name>L-proline</name>
        <dbReference type="ChEBI" id="CHEBI:60039"/>
    </ligand>
</feature>
<feature type="binding site" evidence="1">
    <location>
        <position position="1276"/>
    </location>
    <ligand>
        <name>ATP</name>
        <dbReference type="ChEBI" id="CHEBI:30616"/>
    </ligand>
</feature>
<feature type="binding site" evidence="1">
    <location>
        <position position="1278"/>
    </location>
    <ligand>
        <name>ATP</name>
        <dbReference type="ChEBI" id="CHEBI:30616"/>
    </ligand>
</feature>
<feature type="binding site" evidence="1">
    <location>
        <position position="1448"/>
    </location>
    <ligand>
        <name>Zn(2+)</name>
        <dbReference type="ChEBI" id="CHEBI:29105"/>
    </ligand>
</feature>
<feature type="binding site" evidence="1">
    <location>
        <position position="1453"/>
    </location>
    <ligand>
        <name>Zn(2+)</name>
        <dbReference type="ChEBI" id="CHEBI:29105"/>
    </ligand>
</feature>
<feature type="binding site" evidence="1">
    <location>
        <position position="1495"/>
    </location>
    <ligand>
        <name>Zn(2+)</name>
        <dbReference type="ChEBI" id="CHEBI:29105"/>
    </ligand>
</feature>
<feature type="binding site" evidence="1">
    <location>
        <position position="1497"/>
    </location>
    <ligand>
        <name>Zn(2+)</name>
        <dbReference type="ChEBI" id="CHEBI:29105"/>
    </ligand>
</feature>
<feature type="modified residue" description="N6-acetyllysine; alternate" evidence="13">
    <location>
        <position position="300"/>
    </location>
</feature>
<feature type="modified residue" description="N6-malonyllysine; alternate" evidence="1">
    <location>
        <position position="300"/>
    </location>
</feature>
<feature type="modified residue" description="Phosphothreonine" evidence="1">
    <location>
        <position position="355"/>
    </location>
</feature>
<feature type="modified residue" description="N6-acetyllysine" evidence="1">
    <location>
        <position position="417"/>
    </location>
</feature>
<feature type="modified residue" description="Phosphoserine" evidence="1">
    <location>
        <position position="434"/>
    </location>
</feature>
<feature type="modified residue" description="N6-acetyllysine" evidence="1">
    <location>
        <position position="498"/>
    </location>
</feature>
<feature type="modified residue" description="N6-acetyllysine" evidence="1">
    <location>
        <position position="535"/>
    </location>
</feature>
<feature type="modified residue" description="N6-acetyllysine" evidence="1">
    <location>
        <position position="542"/>
    </location>
</feature>
<feature type="modified residue" description="N6-acetyllysine" evidence="1">
    <location>
        <position position="637"/>
    </location>
</feature>
<feature type="modified residue" description="N6-acetyllysine" evidence="13">
    <location>
        <position position="788"/>
    </location>
</feature>
<feature type="modified residue" description="N6-acetyllysine" evidence="13">
    <location>
        <position position="861"/>
    </location>
</feature>
<feature type="modified residue" description="Phosphotyrosine" evidence="1">
    <location>
        <position position="872"/>
    </location>
</feature>
<feature type="modified residue" description="Phosphoserine" evidence="1">
    <location>
        <position position="885"/>
    </location>
</feature>
<feature type="modified residue" description="Phosphoserine" evidence="1">
    <location>
        <position position="998"/>
    </location>
</feature>
<feature type="modified residue" description="Phosphoserine; by RPS6KB1" evidence="7">
    <location>
        <position position="999"/>
    </location>
</feature>
<feature type="modified residue" description="Omega-N-methylarginine" evidence="1">
    <location>
        <position position="1152"/>
    </location>
</feature>
<feature type="modified residue" description="Phosphoserine" evidence="1">
    <location>
        <position position="1350"/>
    </location>
</feature>
<feature type="modified residue" description="N6-acetyllysine" evidence="1">
    <location>
        <position position="1503"/>
    </location>
</feature>
<feature type="mutagenesis site" description="Loss of function in translation inhibition. Loss of interaction with SLC27A1. Mutant mice have no apparent developmental defect but display reduced adiposity associated with decreased insulin levels and adipocytes size. They also display increased lipolysis and fatty acid beta-oxidation and an extended lifespan. Adipocytes display decreased insulin-stimulated long-chain fatty acid uptake." evidence="7 8">
    <original>S</original>
    <variation>A</variation>
    <location>
        <position position="999"/>
    </location>
</feature>
<feature type="mutagenesis site" description="Constitutively active in translation inhibition (phosphomimetic). Mutant mice have no apparent developmental defect and do not display overt phenotype related to adiposity or lifespan." evidence="7 8">
    <original>S</original>
    <variation>D</variation>
    <location>
        <position position="999"/>
    </location>
</feature>
<feature type="sequence conflict" description="In Ref. 2; AAH40802." evidence="10" ref="2">
    <original>R</original>
    <variation>G</variation>
    <location>
        <position position="94"/>
    </location>
</feature>
<feature type="sequence conflict" description="In Ref. 2; AAH40802." evidence="10" ref="2">
    <original>N</original>
    <variation>S</variation>
    <location>
        <position position="172"/>
    </location>
</feature>
<feature type="sequence conflict" description="In Ref. 2; AAH40802." evidence="10" ref="2">
    <original>S</original>
    <variation>P</variation>
    <location>
        <position position="618"/>
    </location>
</feature>
<feature type="sequence conflict" description="In Ref. 4; X54327." evidence="10" ref="4">
    <original>G</original>
    <variation>R</variation>
    <location>
        <position position="986"/>
    </location>
</feature>
<feature type="sequence conflict" description="In Ref. 2; AAH94679." evidence="10" ref="2">
    <original>N</original>
    <variation>S</variation>
    <location>
        <position position="1290"/>
    </location>
</feature>
<sequence length="1512" mass="170079">MAALCLTVNAGNPPLEALLAVEHVKGDVSISVEEGKENLLRVSETVAFTDVNSILRYLARIATTSGLYGTNLMEHTEIDHWLEFSATKLSSCDRLTSAINELNHCLSLRTYLVGNSLTLADLCVWATLKGSAAWQEHLKQNKTLVHVKRWFGFLEAQQAFRSVGTKWDVSGNRATVAPDKKQDVGKFVELPGAEMGKVTVRFPPEASGYLHIGHAKAALLNQHYQVNFKGKLIMRFDDTNPEKEKEDFEKVILEDVAMLHIKPDQFTYTSDHFETIMKYAEKLIQEGKAYVDDTPAEQMKAEREQRTESKHRKNSVEKNLQMWEEMKKGSQFGQSCCLRAKIDMSSNNGCMRDPTLYRCKIQPHPRTGNKYNVYPTYDFACPIVDSIEGVTHALRTTEYHDRDEQFYWIIEALGIRKPYIWEYSRLNLNNTVLSKRKLTWFVNEGLVDGWDDPRFPTVRGVLRRGMTVEGLKQFIAAQGSSRSVVNMEWDKIWAFNKKVIDPVAPRYVALLKKEVVPVNVLDAQEEMKEVARHPKNPDVGLKPVWYSPKVFIEGADAETFSEGEMVTFINWGNINITKIHKNADGKITSLDAKLNLENKDYKKTTKITWLAESTHALSIPAVCVTYEHLITKPVLGKDEDFKQYINKDSKHEELMLGDPCLKDLKKGDIIQLQRRGFFICDQPYEPVSPYSCREAPCILIYIPDGHTKEMPTSGSKEKTKVEISKKETSSAPKERPAPAVSSTCATAEDSSVLYSRVAVQGDVVRELKAKKAPKEDIDAAVKQLLTLKAEYKEKTGQEYKPGNPSAAAVQTVSTKSSSNTVESTSLYNKVAAQGEVVRKLKAEKAPKAKVTEAVECLLSLKAEYKEKTGKDYVPGQPPASQNSHSNPVSNAQPAGAEKPEAKVLFDRVACQGEVVRKLKAEKASKDQVDSAVQELLQLKAQYKSLTGIEYKPVSATGAEDKDKKKKEKENKSEKQNKPQKQNDGQGKDSSKSQGSGLSSGGAGEGQGPKKQTRLGLEAKKEENLAEWYSQVITKSEMIEYYDVSGCYILRPWSYSIWESIKDFFDAEIKKLGVENCYFPIFVSQAALEKEKNHIEDFAPEVAWVTRSGKTELAEPIAIRPTSETVMYPAYAKWVQSHRDLPVRLNQWCNVVRWEFKHPQPFLRTREFLWQEGHSAFATFEEAADEVLQILELYARVYEELLAIPVVRGRKTEKEKFAGGDYTTTIEAFISASGRAIQGATSHHLGQNFSKMCEIVFEDPKTPGEKQFAYQCSWGLTTRTIGVMVMVHGDNMGLVLPPRVASVQVVVIPCGITNALSEEDREALMAKCNEYRRRLLGANIRVRVDLRDNYSPGWKFNHWELKGVPVRLEVGPRDMKSCQFVAVRRDTGEKLTIAEKEAEAKLEKVLEDIQLNLFTRASEDLKTHMVVSNTLEDFQKVLDAGKVAQIPFCGEIDCEDWIKKMTARDQDVEPGAPSMGAKSLCIPFNPLCELQPGAMCVCGKNPAKFYTLFGRSY</sequence>
<protein>
    <recommendedName>
        <fullName evidence="10">Bifunctional glutamate/proline--tRNA ligase</fullName>
    </recommendedName>
    <alternativeName>
        <fullName>Bifunctional aminoacyl-tRNA synthetase</fullName>
    </alternativeName>
    <domain>
        <recommendedName>
            <fullName evidence="1">Glutamate--tRNA ligase</fullName>
            <ecNumber evidence="1">6.1.1.17</ecNumber>
        </recommendedName>
        <alternativeName>
            <fullName evidence="1">Glutamyl-tRNA synthetase</fullName>
            <shortName evidence="1">GluRS</shortName>
        </alternativeName>
    </domain>
    <domain>
        <recommendedName>
            <fullName evidence="1">Proline--tRNA ligase</fullName>
            <ecNumber evidence="1">6.1.1.15</ecNumber>
        </recommendedName>
        <alternativeName>
            <fullName>Prolyl-tRNA synthetase</fullName>
            <shortName>ProRS</shortName>
        </alternativeName>
    </domain>
</protein>
<evidence type="ECO:0000250" key="1">
    <source>
        <dbReference type="UniProtKB" id="P07814"/>
    </source>
</evidence>
<evidence type="ECO:0000250" key="2">
    <source>
        <dbReference type="UniProtKB" id="P28668"/>
    </source>
</evidence>
<evidence type="ECO:0000250" key="3">
    <source>
        <dbReference type="UniProtKB" id="Q7SIA2"/>
    </source>
</evidence>
<evidence type="ECO:0000255" key="4">
    <source>
        <dbReference type="PROSITE-ProRule" id="PRU00531"/>
    </source>
</evidence>
<evidence type="ECO:0000256" key="5">
    <source>
        <dbReference type="SAM" id="MobiDB-lite"/>
    </source>
</evidence>
<evidence type="ECO:0000269" key="6">
    <source>
    </source>
</evidence>
<evidence type="ECO:0000269" key="7">
    <source>
    </source>
</evidence>
<evidence type="ECO:0000269" key="8">
    <source>
    </source>
</evidence>
<evidence type="ECO:0000303" key="9">
    <source>
    </source>
</evidence>
<evidence type="ECO:0000305" key="10"/>
<evidence type="ECO:0000305" key="11">
    <source>
    </source>
</evidence>
<evidence type="ECO:0000312" key="12">
    <source>
        <dbReference type="MGI" id="MGI:97838"/>
    </source>
</evidence>
<evidence type="ECO:0007744" key="13">
    <source>
    </source>
</evidence>
<comment type="function">
    <text evidence="1 7 8">Multifunctional protein which primarily functions within the aminoacyl-tRNA synthetase multienzyme complex, also known as multisynthetase complex. Within the complex it catalyzes the attachment of both L-glutamate and L-proline to their cognate tRNAs in a two-step reaction where the amino acid is first activated by ATP to form a covalent intermediate with AMP. Subsequently, the activated amino acid is transferred to the acceptor end of the cognate tRNA to form L-glutamyl-tRNA(Glu) and L-prolyl-tRNA(Pro) (By similarity). Upon interferon-gamma stimulation, EPRS1 undergoes phosphorylation, causing its dissociation from the aminoacyl-tRNA synthetase multienzyme complex. It is recruited to form the GAIT complex, which binds to stem loop-containing GAIT elements found in the 3'-UTR of various inflammatory mRNAs, such as ceruloplasmin. The GAIT complex inhibits the translation of these mRNAs, allowing interferon-gamma to redirect the function of EPRS1 from protein synthesis to translation inhibition in specific cell contexts (PubMed:23071094). Furthermore, it can function as a downstream effector in the mTORC1 signaling pathway, by promoting the translocation of SLC27A1 from the cytoplasm to the plasma membrane where it mediates the uptake of long-chain fatty acid by adipocytes. Thereby, EPRS1 also plays a role in fat metabolism and more indirectly influences lifespan (PubMed:28178239).</text>
</comment>
<comment type="catalytic activity">
    <reaction evidence="1">
        <text>tRNA(Glu) + L-glutamate + ATP = L-glutamyl-tRNA(Glu) + AMP + diphosphate</text>
        <dbReference type="Rhea" id="RHEA:23540"/>
        <dbReference type="Rhea" id="RHEA-COMP:9663"/>
        <dbReference type="Rhea" id="RHEA-COMP:9680"/>
        <dbReference type="ChEBI" id="CHEBI:29985"/>
        <dbReference type="ChEBI" id="CHEBI:30616"/>
        <dbReference type="ChEBI" id="CHEBI:33019"/>
        <dbReference type="ChEBI" id="CHEBI:78442"/>
        <dbReference type="ChEBI" id="CHEBI:78520"/>
        <dbReference type="ChEBI" id="CHEBI:456215"/>
        <dbReference type="EC" id="6.1.1.17"/>
    </reaction>
    <physiologicalReaction direction="left-to-right" evidence="1">
        <dbReference type="Rhea" id="RHEA:23541"/>
    </physiologicalReaction>
</comment>
<comment type="catalytic activity">
    <reaction evidence="1">
        <text>tRNA(Pro) + L-proline + ATP = L-prolyl-tRNA(Pro) + AMP + diphosphate</text>
        <dbReference type="Rhea" id="RHEA:14305"/>
        <dbReference type="Rhea" id="RHEA-COMP:9700"/>
        <dbReference type="Rhea" id="RHEA-COMP:9702"/>
        <dbReference type="ChEBI" id="CHEBI:30616"/>
        <dbReference type="ChEBI" id="CHEBI:33019"/>
        <dbReference type="ChEBI" id="CHEBI:60039"/>
        <dbReference type="ChEBI" id="CHEBI:78442"/>
        <dbReference type="ChEBI" id="CHEBI:78532"/>
        <dbReference type="ChEBI" id="CHEBI:456215"/>
        <dbReference type="EC" id="6.1.1.15"/>
    </reaction>
    <physiologicalReaction direction="left-to-right" evidence="1">
        <dbReference type="Rhea" id="RHEA:14306"/>
    </physiologicalReaction>
</comment>
<comment type="subunit">
    <text evidence="1 6 7 8">Homodimer. Part of the aminoacyl-tRNA synthetase multienzyme complex, also know as multisynthetase complex, that is composed of the tRNA ligases for Arg (RARS1), Asp (DARS1), Gln (QARS1), Ile (IARS1), Leu (LARS1), Lys (KARS1), Met (MARS1) the bifunctional ligase for Glu and Pro (EPRS1) and the auxiliary subunits AIMP1/p43, AIMP2/p38 and EEF1E1/p18. Forms a linear complex that contains MARS1, EEF1E1, EPRS1 and AIMP2 that is at the core of the multisubunit complex (PubMed:12060739). Interacts with TARS3 (By similarity). Interacts with DUS2L (By similarity). Component of the GAIT complex which is composed of EPRS1, RPL13A and GAPDH (PubMed:23071094). Interacts (phosphorylated at Ser-999) with SLC27A1; mediates the translocation of SLC27A1 from the cytoplasm to the plasma membrane thereby increasing the uptake of long-chain fatty acids (PubMed:28178239).</text>
</comment>
<comment type="subcellular location">
    <subcellularLocation>
        <location evidence="1">Cytoplasm</location>
        <location evidence="1">Cytosol</location>
    </subcellularLocation>
    <subcellularLocation>
        <location evidence="8">Membrane</location>
        <topology evidence="11">Peripheral membrane protein</topology>
    </subcellularLocation>
    <text evidence="11">Translocates from cytosol to membranes upon phosphorylation at Ser-999.</text>
</comment>
<comment type="domain">
    <text evidence="3">The WHEP-TRS domains are involved in RNA binding.</text>
</comment>
<comment type="PTM">
    <text evidence="1 8">Phosphorylated at Ser-999 by RPS6KB1; triggers EPRS1 release from the aminoacyl-tRNA synthetase multienzyme complex. In monocytes, the IFN-gamma-induced phosphorylation at Ser-999 releases EPRS1 from the aminoacyl-tRNA synthetase multienzyme complex, allowing its association with the GAIT complex. Phosphorylation at Ser-999 is specifically required for the RPL13A-mediated interaction of the GAIT complex with eIF4G (By similarity). Phosphorylation at Ser-999 by RPS6KB1, is also induced by insulin through activation of the mTORC1 signaling pathway and promotes the interaction of EPRS1 with SLC27A1 (PubMed:28178239).</text>
</comment>
<comment type="similarity">
    <text evidence="10">In the N-terminal section; belongs to the class-I aminoacyl-tRNA synthetase family. Glutamate--tRNA ligase type 2 subfamily.</text>
</comment>
<comment type="similarity">
    <text evidence="10">In the C-terminal section; belongs to the class-II aminoacyl-tRNA synthetase family.</text>
</comment>
<comment type="sequence caution" evidence="10">
    <conflict type="miscellaneous discrepancy">
        <sequence resource="EMBL-CDS" id="AAH40802"/>
    </conflict>
    <text>Contaminating sequence. Potential poly-A sequence.</text>
</comment>
<dbReference type="EC" id="6.1.1.17" evidence="1"/>
<dbReference type="EC" id="6.1.1.15" evidence="1"/>
<dbReference type="EMBL" id="AC129195">
    <property type="status" value="NOT_ANNOTATED_CDS"/>
    <property type="molecule type" value="Genomic_DNA"/>
</dbReference>
<dbReference type="EMBL" id="AC131980">
    <property type="status" value="NOT_ANNOTATED_CDS"/>
    <property type="molecule type" value="Genomic_DNA"/>
</dbReference>
<dbReference type="EMBL" id="BC040802">
    <property type="protein sequence ID" value="AAH40802.1"/>
    <property type="status" value="ALT_SEQ"/>
    <property type="molecule type" value="mRNA"/>
</dbReference>
<dbReference type="EMBL" id="BC094679">
    <property type="protein sequence ID" value="AAH94679.1"/>
    <property type="molecule type" value="mRNA"/>
</dbReference>
<dbReference type="EMBL" id="AK148463">
    <property type="protein sequence ID" value="BAE28568.1"/>
    <property type="molecule type" value="mRNA"/>
</dbReference>
<dbReference type="EMBL" id="X54327">
    <property type="status" value="NOT_ANNOTATED_CDS"/>
    <property type="molecule type" value="mRNA"/>
</dbReference>
<dbReference type="CCDS" id="CCDS35818.1"/>
<dbReference type="RefSeq" id="NP_084011.1">
    <property type="nucleotide sequence ID" value="NM_029735.2"/>
</dbReference>
<dbReference type="SMR" id="Q8CGC7"/>
<dbReference type="BioGRID" id="223350">
    <property type="interactions" value="61"/>
</dbReference>
<dbReference type="FunCoup" id="Q8CGC7">
    <property type="interactions" value="2578"/>
</dbReference>
<dbReference type="IntAct" id="Q8CGC7">
    <property type="interactions" value="7"/>
</dbReference>
<dbReference type="MINT" id="Q8CGC7"/>
<dbReference type="STRING" id="10090.ENSMUSP00000045841"/>
<dbReference type="GlyGen" id="Q8CGC7">
    <property type="glycosylation" value="2 sites, 1 O-linked glycan (2 sites)"/>
</dbReference>
<dbReference type="iPTMnet" id="Q8CGC7"/>
<dbReference type="PhosphoSitePlus" id="Q8CGC7"/>
<dbReference type="SwissPalm" id="Q8CGC7"/>
<dbReference type="jPOST" id="Q8CGC7"/>
<dbReference type="PaxDb" id="10090-ENSMUSP00000045841"/>
<dbReference type="PeptideAtlas" id="Q8CGC7"/>
<dbReference type="ProteomicsDB" id="254505"/>
<dbReference type="Pumba" id="Q8CGC7"/>
<dbReference type="Antibodypedia" id="20734">
    <property type="antibodies" value="209 antibodies from 31 providers"/>
</dbReference>
<dbReference type="DNASU" id="107508"/>
<dbReference type="Ensembl" id="ENSMUST00000046514.13">
    <property type="protein sequence ID" value="ENSMUSP00000045841.8"/>
    <property type="gene ID" value="ENSMUSG00000026615.15"/>
</dbReference>
<dbReference type="GeneID" id="107508"/>
<dbReference type="KEGG" id="mmu:107508"/>
<dbReference type="UCSC" id="uc007dze.1">
    <property type="organism name" value="mouse"/>
</dbReference>
<dbReference type="AGR" id="MGI:97838"/>
<dbReference type="CTD" id="2058"/>
<dbReference type="MGI" id="MGI:97838">
    <property type="gene designation" value="Eprs1"/>
</dbReference>
<dbReference type="VEuPathDB" id="HostDB:ENSMUSG00000026615"/>
<dbReference type="eggNOG" id="KOG1147">
    <property type="taxonomic scope" value="Eukaryota"/>
</dbReference>
<dbReference type="eggNOG" id="KOG4163">
    <property type="taxonomic scope" value="Eukaryota"/>
</dbReference>
<dbReference type="GeneTree" id="ENSGT00550000074815"/>
<dbReference type="HOGENOM" id="CLU_001882_0_2_1"/>
<dbReference type="InParanoid" id="Q8CGC7"/>
<dbReference type="OMA" id="NVTFINW"/>
<dbReference type="PhylomeDB" id="Q8CGC7"/>
<dbReference type="TreeFam" id="TF300380"/>
<dbReference type="BRENDA" id="6.1.1.15">
    <property type="organism ID" value="3474"/>
</dbReference>
<dbReference type="BRENDA" id="6.1.1.17">
    <property type="organism ID" value="3474"/>
</dbReference>
<dbReference type="Reactome" id="R-MMU-9856649">
    <property type="pathway name" value="Transcriptional and post-translational regulation of MITF-M expression and activity"/>
</dbReference>
<dbReference type="BioGRID-ORCS" id="107508">
    <property type="hits" value="27 hits in 82 CRISPR screens"/>
</dbReference>
<dbReference type="CD-CODE" id="CE726F99">
    <property type="entry name" value="Postsynaptic density"/>
</dbReference>
<dbReference type="ChiTaRS" id="Eprs">
    <property type="organism name" value="mouse"/>
</dbReference>
<dbReference type="PRO" id="PR:Q8CGC7"/>
<dbReference type="Proteomes" id="UP000000589">
    <property type="component" value="Chromosome 1"/>
</dbReference>
<dbReference type="RNAct" id="Q8CGC7">
    <property type="molecule type" value="protein"/>
</dbReference>
<dbReference type="Bgee" id="ENSMUSG00000026615">
    <property type="expression patterns" value="Expressed in otic placode and 261 other cell types or tissues"/>
</dbReference>
<dbReference type="ExpressionAtlas" id="Q8CGC7">
    <property type="expression patterns" value="baseline and differential"/>
</dbReference>
<dbReference type="GO" id="GO:0017101">
    <property type="term" value="C:aminoacyl-tRNA synthetase multienzyme complex"/>
    <property type="evidence" value="ECO:0000314"/>
    <property type="project" value="UniProtKB"/>
</dbReference>
<dbReference type="GO" id="GO:0005829">
    <property type="term" value="C:cytosol"/>
    <property type="evidence" value="ECO:0000250"/>
    <property type="project" value="UniProtKB"/>
</dbReference>
<dbReference type="GO" id="GO:0097452">
    <property type="term" value="C:GAIT complex"/>
    <property type="evidence" value="ECO:0000314"/>
    <property type="project" value="UniProtKB"/>
</dbReference>
<dbReference type="GO" id="GO:0005886">
    <property type="term" value="C:plasma membrane"/>
    <property type="evidence" value="ECO:0000314"/>
    <property type="project" value="UniProtKB"/>
</dbReference>
<dbReference type="GO" id="GO:1990904">
    <property type="term" value="C:ribonucleoprotein complex"/>
    <property type="evidence" value="ECO:0007669"/>
    <property type="project" value="Ensembl"/>
</dbReference>
<dbReference type="GO" id="GO:0005524">
    <property type="term" value="F:ATP binding"/>
    <property type="evidence" value="ECO:0007669"/>
    <property type="project" value="UniProtKB-KW"/>
</dbReference>
<dbReference type="GO" id="GO:0004818">
    <property type="term" value="F:glutamate-tRNA ligase activity"/>
    <property type="evidence" value="ECO:0000250"/>
    <property type="project" value="UniProtKB"/>
</dbReference>
<dbReference type="GO" id="GO:0051020">
    <property type="term" value="F:GTPase binding"/>
    <property type="evidence" value="ECO:0007669"/>
    <property type="project" value="Ensembl"/>
</dbReference>
<dbReference type="GO" id="GO:0004827">
    <property type="term" value="F:proline-tRNA ligase activity"/>
    <property type="evidence" value="ECO:0000315"/>
    <property type="project" value="CAFA"/>
</dbReference>
<dbReference type="GO" id="GO:0042803">
    <property type="term" value="F:protein homodimerization activity"/>
    <property type="evidence" value="ECO:0007669"/>
    <property type="project" value="Ensembl"/>
</dbReference>
<dbReference type="GO" id="GO:0035613">
    <property type="term" value="F:RNA stem-loop binding"/>
    <property type="evidence" value="ECO:0000250"/>
    <property type="project" value="UniProtKB"/>
</dbReference>
<dbReference type="GO" id="GO:0008270">
    <property type="term" value="F:zinc ion binding"/>
    <property type="evidence" value="ECO:0000250"/>
    <property type="project" value="UniProtKB"/>
</dbReference>
<dbReference type="GO" id="GO:0032869">
    <property type="term" value="P:cellular response to insulin stimulus"/>
    <property type="evidence" value="ECO:0000315"/>
    <property type="project" value="UniProtKB"/>
</dbReference>
<dbReference type="GO" id="GO:0071346">
    <property type="term" value="P:cellular response to type II interferon"/>
    <property type="evidence" value="ECO:0000314"/>
    <property type="project" value="UniProtKB"/>
</dbReference>
<dbReference type="GO" id="GO:0006424">
    <property type="term" value="P:glutamyl-tRNA aminoacylation"/>
    <property type="evidence" value="ECO:0000250"/>
    <property type="project" value="UniProtKB"/>
</dbReference>
<dbReference type="GO" id="GO:0017148">
    <property type="term" value="P:negative regulation of translation"/>
    <property type="evidence" value="ECO:0000314"/>
    <property type="project" value="UniProtKB"/>
</dbReference>
<dbReference type="GO" id="GO:0006433">
    <property type="term" value="P:prolyl-tRNA aminoacylation"/>
    <property type="evidence" value="ECO:0000314"/>
    <property type="project" value="CAFA"/>
</dbReference>
<dbReference type="GO" id="GO:0140212">
    <property type="term" value="P:regulation of long-chain fatty acid import into cell"/>
    <property type="evidence" value="ECO:0000315"/>
    <property type="project" value="UniProtKB"/>
</dbReference>
<dbReference type="CDD" id="cd00807">
    <property type="entry name" value="GlnRS_core"/>
    <property type="match status" value="1"/>
</dbReference>
<dbReference type="CDD" id="cd10309">
    <property type="entry name" value="GST_C_GluProRS_N"/>
    <property type="match status" value="1"/>
</dbReference>
<dbReference type="CDD" id="cd00862">
    <property type="entry name" value="ProRS_anticodon_zinc"/>
    <property type="match status" value="1"/>
</dbReference>
<dbReference type="CDD" id="cd00778">
    <property type="entry name" value="ProRS_core_arch_euk"/>
    <property type="match status" value="1"/>
</dbReference>
<dbReference type="CDD" id="cd00936">
    <property type="entry name" value="WEPRS_RNA"/>
    <property type="match status" value="3"/>
</dbReference>
<dbReference type="FunFam" id="1.10.287.10:FF:000006">
    <property type="entry name" value="Bifunctional glutamate/proline--tRNA ligase"/>
    <property type="match status" value="1"/>
</dbReference>
<dbReference type="FunFam" id="1.20.1050.130:FF:000004">
    <property type="entry name" value="Bifunctional glutamate/proline--tRNA ligase"/>
    <property type="match status" value="1"/>
</dbReference>
<dbReference type="FunFam" id="2.40.240.10:FF:000005">
    <property type="entry name" value="Bifunctional glutamate/proline--tRNA ligase"/>
    <property type="match status" value="1"/>
</dbReference>
<dbReference type="FunFam" id="3.30.110.30:FF:000001">
    <property type="entry name" value="Bifunctional glutamate/proline--tRNA ligase"/>
    <property type="match status" value="1"/>
</dbReference>
<dbReference type="FunFam" id="3.30.930.10:FF:000007">
    <property type="entry name" value="Bifunctional glutamate/proline--tRNA ligase"/>
    <property type="match status" value="1"/>
</dbReference>
<dbReference type="FunFam" id="3.40.50.620:FF:000070">
    <property type="entry name" value="Bifunctional glutamate/proline--tRNA ligase"/>
    <property type="match status" value="1"/>
</dbReference>
<dbReference type="FunFam" id="1.10.287.10:FF:000004">
    <property type="entry name" value="bifunctional glutamate/proline--tRNA ligase"/>
    <property type="match status" value="2"/>
</dbReference>
<dbReference type="FunFam" id="3.40.50.800:FF:000005">
    <property type="entry name" value="bifunctional glutamate/proline--tRNA ligase"/>
    <property type="match status" value="1"/>
</dbReference>
<dbReference type="Gene3D" id="1.20.1050.130">
    <property type="match status" value="1"/>
</dbReference>
<dbReference type="Gene3D" id="3.40.50.800">
    <property type="entry name" value="Anticodon-binding domain"/>
    <property type="match status" value="1"/>
</dbReference>
<dbReference type="Gene3D" id="3.30.930.10">
    <property type="entry name" value="Bira Bifunctional Protein, Domain 2"/>
    <property type="match status" value="1"/>
</dbReference>
<dbReference type="Gene3D" id="3.30.110.30">
    <property type="entry name" value="C-terminal domain of ProRS"/>
    <property type="match status" value="1"/>
</dbReference>
<dbReference type="Gene3D" id="3.40.50.620">
    <property type="entry name" value="HUPs"/>
    <property type="match status" value="1"/>
</dbReference>
<dbReference type="Gene3D" id="2.40.240.10">
    <property type="entry name" value="Ribosomal Protein L25, Chain P"/>
    <property type="match status" value="2"/>
</dbReference>
<dbReference type="Gene3D" id="1.10.287.10">
    <property type="entry name" value="S15/NS1, RNA-binding"/>
    <property type="match status" value="3"/>
</dbReference>
<dbReference type="HAMAP" id="MF_02076">
    <property type="entry name" value="Glu_tRNA_synth_type2"/>
    <property type="match status" value="1"/>
</dbReference>
<dbReference type="HAMAP" id="MF_01571">
    <property type="entry name" value="Pro_tRNA_synth_type3"/>
    <property type="match status" value="1"/>
</dbReference>
<dbReference type="InterPro" id="IPR002314">
    <property type="entry name" value="aa-tRNA-synt_IIb"/>
</dbReference>
<dbReference type="InterPro" id="IPR001412">
    <property type="entry name" value="aa-tRNA-synth_I_CS"/>
</dbReference>
<dbReference type="InterPro" id="IPR006195">
    <property type="entry name" value="aa-tRNA-synth_II"/>
</dbReference>
<dbReference type="InterPro" id="IPR045864">
    <property type="entry name" value="aa-tRNA-synth_II/BPL/LPL"/>
</dbReference>
<dbReference type="InterPro" id="IPR004154">
    <property type="entry name" value="Anticodon-bd"/>
</dbReference>
<dbReference type="InterPro" id="IPR036621">
    <property type="entry name" value="Anticodon-bd_dom_sf"/>
</dbReference>
<dbReference type="InterPro" id="IPR053836">
    <property type="entry name" value="Arc1-like_N"/>
</dbReference>
<dbReference type="InterPro" id="IPR004526">
    <property type="entry name" value="Glu-tRNA-synth_arc/euk"/>
</dbReference>
<dbReference type="InterPro" id="IPR000924">
    <property type="entry name" value="Glu/Gln-tRNA-synth"/>
</dbReference>
<dbReference type="InterPro" id="IPR020058">
    <property type="entry name" value="Glu/Gln-tRNA-synth_Ib_cat-dom"/>
</dbReference>
<dbReference type="InterPro" id="IPR020059">
    <property type="entry name" value="Glu/Gln-tRNA-synth_Ib_codon-bd"/>
</dbReference>
<dbReference type="InterPro" id="IPR036282">
    <property type="entry name" value="Glutathione-S-Trfase_C_sf"/>
</dbReference>
<dbReference type="InterPro" id="IPR004499">
    <property type="entry name" value="Pro-tRNA-ligase_IIa_arc-type"/>
</dbReference>
<dbReference type="InterPro" id="IPR016061">
    <property type="entry name" value="Pro-tRNA_ligase_II_C"/>
</dbReference>
<dbReference type="InterPro" id="IPR017449">
    <property type="entry name" value="Pro-tRNA_synth_II"/>
</dbReference>
<dbReference type="InterPro" id="IPR033721">
    <property type="entry name" value="ProRS_core_arch_euk"/>
</dbReference>
<dbReference type="InterPro" id="IPR020056">
    <property type="entry name" value="Rbsml_bL25/Gln-tRNA_synth_N"/>
</dbReference>
<dbReference type="InterPro" id="IPR011035">
    <property type="entry name" value="Ribosomal_bL25/Gln-tRNA_synth"/>
</dbReference>
<dbReference type="InterPro" id="IPR014729">
    <property type="entry name" value="Rossmann-like_a/b/a_fold"/>
</dbReference>
<dbReference type="InterPro" id="IPR049437">
    <property type="entry name" value="tRNA-synt_1c_C2"/>
</dbReference>
<dbReference type="InterPro" id="IPR009068">
    <property type="entry name" value="uS15_NS1_RNA-bd_sf"/>
</dbReference>
<dbReference type="InterPro" id="IPR000738">
    <property type="entry name" value="WHEP-TRS_dom"/>
</dbReference>
<dbReference type="NCBIfam" id="TIGR00463">
    <property type="entry name" value="gltX_arch"/>
    <property type="match status" value="1"/>
</dbReference>
<dbReference type="NCBIfam" id="TIGR00408">
    <property type="entry name" value="proS_fam_I"/>
    <property type="match status" value="1"/>
</dbReference>
<dbReference type="PANTHER" id="PTHR43382:SF2">
    <property type="entry name" value="BIFUNCTIONAL GLUTAMATE_PROLINE--TRNA LIGASE"/>
    <property type="match status" value="1"/>
</dbReference>
<dbReference type="PANTHER" id="PTHR43382">
    <property type="entry name" value="PROLYL-TRNA SYNTHETASE"/>
    <property type="match status" value="1"/>
</dbReference>
<dbReference type="Pfam" id="PF21972">
    <property type="entry name" value="Arc1p_N_like"/>
    <property type="match status" value="1"/>
</dbReference>
<dbReference type="Pfam" id="PF03129">
    <property type="entry name" value="HGTP_anticodon"/>
    <property type="match status" value="1"/>
</dbReference>
<dbReference type="Pfam" id="PF09180">
    <property type="entry name" value="ProRS-C_1"/>
    <property type="match status" value="1"/>
</dbReference>
<dbReference type="Pfam" id="PF00749">
    <property type="entry name" value="tRNA-synt_1c"/>
    <property type="match status" value="1"/>
</dbReference>
<dbReference type="Pfam" id="PF03950">
    <property type="entry name" value="tRNA-synt_1c_C"/>
    <property type="match status" value="1"/>
</dbReference>
<dbReference type="Pfam" id="PF20974">
    <property type="entry name" value="tRNA-synt_1c_C2"/>
    <property type="match status" value="1"/>
</dbReference>
<dbReference type="Pfam" id="PF00587">
    <property type="entry name" value="tRNA-synt_2b"/>
    <property type="match status" value="1"/>
</dbReference>
<dbReference type="Pfam" id="PF00458">
    <property type="entry name" value="WHEP-TRS"/>
    <property type="match status" value="3"/>
</dbReference>
<dbReference type="PRINTS" id="PR00987">
    <property type="entry name" value="TRNASYNTHGLU"/>
</dbReference>
<dbReference type="SMART" id="SM00946">
    <property type="entry name" value="ProRS-C_1"/>
    <property type="match status" value="1"/>
</dbReference>
<dbReference type="SMART" id="SM00991">
    <property type="entry name" value="WHEP-TRS"/>
    <property type="match status" value="3"/>
</dbReference>
<dbReference type="SUPFAM" id="SSF64586">
    <property type="entry name" value="C-terminal domain of ProRS"/>
    <property type="match status" value="1"/>
</dbReference>
<dbReference type="SUPFAM" id="SSF52954">
    <property type="entry name" value="Class II aaRS ABD-related"/>
    <property type="match status" value="1"/>
</dbReference>
<dbReference type="SUPFAM" id="SSF55681">
    <property type="entry name" value="Class II aaRS and biotin synthetases"/>
    <property type="match status" value="1"/>
</dbReference>
<dbReference type="SUPFAM" id="SSF47616">
    <property type="entry name" value="GST C-terminal domain-like"/>
    <property type="match status" value="1"/>
</dbReference>
<dbReference type="SUPFAM" id="SSF52374">
    <property type="entry name" value="Nucleotidylyl transferase"/>
    <property type="match status" value="1"/>
</dbReference>
<dbReference type="SUPFAM" id="SSF50715">
    <property type="entry name" value="Ribosomal protein L25-like"/>
    <property type="match status" value="1"/>
</dbReference>
<dbReference type="SUPFAM" id="SSF47060">
    <property type="entry name" value="S15/NS1 RNA-binding domain"/>
    <property type="match status" value="3"/>
</dbReference>
<dbReference type="PROSITE" id="PS00178">
    <property type="entry name" value="AA_TRNA_LIGASE_I"/>
    <property type="match status" value="1"/>
</dbReference>
<dbReference type="PROSITE" id="PS50862">
    <property type="entry name" value="AA_TRNA_LIGASE_II"/>
    <property type="match status" value="1"/>
</dbReference>
<dbReference type="PROSITE" id="PS00762">
    <property type="entry name" value="WHEP_TRS_1"/>
    <property type="match status" value="2"/>
</dbReference>
<dbReference type="PROSITE" id="PS51185">
    <property type="entry name" value="WHEP_TRS_2"/>
    <property type="match status" value="3"/>
</dbReference>